<feature type="signal peptide" evidence="2">
    <location>
        <begin position="1"/>
        <end position="20"/>
    </location>
</feature>
<feature type="propeptide" id="PRO_5000566275" evidence="5">
    <location>
        <begin position="21"/>
        <end position="68"/>
    </location>
</feature>
<feature type="peptide" id="PRO_5000566276" description="Conotoxin Cal14.13b" evidence="5">
    <location>
        <begin position="40"/>
        <end position="66"/>
    </location>
</feature>
<feature type="modified residue" description="Methionine amide" evidence="5">
    <location>
        <position position="66"/>
    </location>
</feature>
<accession>D2Y101</accession>
<dbReference type="EMBL" id="GU289669">
    <property type="protein sequence ID" value="ADB28953.1"/>
    <property type="molecule type" value="mRNA"/>
</dbReference>
<dbReference type="SMR" id="D2Y101"/>
<dbReference type="ConoServer" id="3978">
    <property type="toxin name" value="Cal14.13b precursor"/>
</dbReference>
<dbReference type="GO" id="GO:0005576">
    <property type="term" value="C:extracellular region"/>
    <property type="evidence" value="ECO:0007669"/>
    <property type="project" value="UniProtKB-SubCell"/>
</dbReference>
<dbReference type="GO" id="GO:0099106">
    <property type="term" value="F:ion channel regulator activity"/>
    <property type="evidence" value="ECO:0007669"/>
    <property type="project" value="UniProtKB-KW"/>
</dbReference>
<dbReference type="GO" id="GO:0090729">
    <property type="term" value="F:toxin activity"/>
    <property type="evidence" value="ECO:0007669"/>
    <property type="project" value="UniProtKB-KW"/>
</dbReference>
<evidence type="ECO:0000250" key="1"/>
<evidence type="ECO:0000255" key="2"/>
<evidence type="ECO:0000303" key="3">
    <source>
    </source>
</evidence>
<evidence type="ECO:0000305" key="4"/>
<evidence type="ECO:0000305" key="5">
    <source>
    </source>
</evidence>
<proteinExistence type="evidence at protein level"/>
<comment type="function">
    <text evidence="4">Probable neurotoxin with unknown target. Possibly targets ion channels.</text>
</comment>
<comment type="subcellular location">
    <subcellularLocation>
        <location evidence="5">Secreted</location>
    </subcellularLocation>
</comment>
<comment type="tissue specificity">
    <text evidence="5">Expressed by the venom duct.</text>
</comment>
<comment type="domain">
    <text>The cysteine framework is XIV (C-C-C-C).</text>
</comment>
<comment type="PTM">
    <text evidence="1">Contains 2 disulfide bonds.</text>
</comment>
<reference key="1">
    <citation type="journal article" date="2011" name="Toxicon">
        <title>Diversity of conotoxin types from Conus californicus reflects a diversity of prey types and a novel evolutionary history.</title>
        <authorList>
            <person name="Elliger C.A."/>
            <person name="Richmond T.A."/>
            <person name="Lebaric Z.N."/>
            <person name="Pierce N.T."/>
            <person name="Sweedler J.V."/>
            <person name="Gilly W.F."/>
        </authorList>
    </citation>
    <scope>NUCLEOTIDE SEQUENCE [MRNA]</scope>
    <scope>AMIDATION AT MET-66</scope>
    <source>
        <tissue>Venom duct</tissue>
    </source>
</reference>
<protein>
    <recommendedName>
        <fullName evidence="4">Conotoxin Cal14.13b</fullName>
    </recommendedName>
    <alternativeName>
        <fullName evidence="3">Conotoxin Cal14.1b</fullName>
    </alternativeName>
</protein>
<keyword id="KW-0027">Amidation</keyword>
<keyword id="KW-1015">Disulfide bond</keyword>
<keyword id="KW-0872">Ion channel impairing toxin</keyword>
<keyword id="KW-0528">Neurotoxin</keyword>
<keyword id="KW-0964">Secreted</keyword>
<keyword id="KW-0732">Signal</keyword>
<keyword id="KW-0800">Toxin</keyword>
<organism>
    <name type="scientific">Californiconus californicus</name>
    <name type="common">California cone</name>
    <name type="synonym">Conus californicus</name>
    <dbReference type="NCBI Taxonomy" id="1736779"/>
    <lineage>
        <taxon>Eukaryota</taxon>
        <taxon>Metazoa</taxon>
        <taxon>Spiralia</taxon>
        <taxon>Lophotrochozoa</taxon>
        <taxon>Mollusca</taxon>
        <taxon>Gastropoda</taxon>
        <taxon>Caenogastropoda</taxon>
        <taxon>Neogastropoda</taxon>
        <taxon>Conoidea</taxon>
        <taxon>Conidae</taxon>
        <taxon>Californiconus</taxon>
    </lineage>
</organism>
<name>CUEDB_CONCL</name>
<sequence length="68" mass="7527">MKLCVVIVLLMLAMPFNGGEASRFFNQHARSQRSGMKTRGIWCDPPCPEGETCRGGECSDEFNGDMGR</sequence>